<evidence type="ECO:0000255" key="1">
    <source>
        <dbReference type="HAMAP-Rule" id="MF_00033"/>
    </source>
</evidence>
<organism>
    <name type="scientific">Sodalis glossinidius (strain morsitans)</name>
    <dbReference type="NCBI Taxonomy" id="343509"/>
    <lineage>
        <taxon>Bacteria</taxon>
        <taxon>Pseudomonadati</taxon>
        <taxon>Pseudomonadota</taxon>
        <taxon>Gammaproteobacteria</taxon>
        <taxon>Enterobacterales</taxon>
        <taxon>Bruguierivoracaceae</taxon>
        <taxon>Sodalis</taxon>
    </lineage>
</organism>
<keyword id="KW-0131">Cell cycle</keyword>
<keyword id="KW-0132">Cell division</keyword>
<keyword id="KW-0997">Cell inner membrane</keyword>
<keyword id="KW-1003">Cell membrane</keyword>
<keyword id="KW-0133">Cell shape</keyword>
<keyword id="KW-0961">Cell wall biogenesis/degradation</keyword>
<keyword id="KW-0328">Glycosyltransferase</keyword>
<keyword id="KW-0472">Membrane</keyword>
<keyword id="KW-0573">Peptidoglycan synthesis</keyword>
<keyword id="KW-0808">Transferase</keyword>
<comment type="function">
    <text evidence="1">Cell wall formation. Catalyzes the transfer of a GlcNAc subunit on undecaprenyl-pyrophosphoryl-MurNAc-pentapeptide (lipid intermediate I) to form undecaprenyl-pyrophosphoryl-MurNAc-(pentapeptide)GlcNAc (lipid intermediate II).</text>
</comment>
<comment type="catalytic activity">
    <reaction evidence="1">
        <text>di-trans,octa-cis-undecaprenyl diphospho-N-acetyl-alpha-D-muramoyl-L-alanyl-D-glutamyl-meso-2,6-diaminopimeloyl-D-alanyl-D-alanine + UDP-N-acetyl-alpha-D-glucosamine = di-trans,octa-cis-undecaprenyl diphospho-[N-acetyl-alpha-D-glucosaminyl-(1-&gt;4)]-N-acetyl-alpha-D-muramoyl-L-alanyl-D-glutamyl-meso-2,6-diaminopimeloyl-D-alanyl-D-alanine + UDP + H(+)</text>
        <dbReference type="Rhea" id="RHEA:31227"/>
        <dbReference type="ChEBI" id="CHEBI:15378"/>
        <dbReference type="ChEBI" id="CHEBI:57705"/>
        <dbReference type="ChEBI" id="CHEBI:58223"/>
        <dbReference type="ChEBI" id="CHEBI:61387"/>
        <dbReference type="ChEBI" id="CHEBI:61388"/>
        <dbReference type="EC" id="2.4.1.227"/>
    </reaction>
</comment>
<comment type="pathway">
    <text evidence="1">Cell wall biogenesis; peptidoglycan biosynthesis.</text>
</comment>
<comment type="subcellular location">
    <subcellularLocation>
        <location evidence="1">Cell inner membrane</location>
        <topology evidence="1">Peripheral membrane protein</topology>
        <orientation evidence="1">Cytoplasmic side</orientation>
    </subcellularLocation>
</comment>
<comment type="similarity">
    <text evidence="1">Belongs to the glycosyltransferase 28 family. MurG subfamily.</text>
</comment>
<sequence>MTAKTRRLMVMAGGTGGHVFPGLAVAHHLMAQGWQVRWLGTANRMEADLVPQHGIDIDFIRISGLRGKGLKAQLLAPVRIWRALRQARRIMRAWRPDVVLGMGGYVSGPGGLAAWSCGIPVVLHEQNGIAGLTNRGLAKISRKVLQAFPGAFPHADVVGNPVRDAVLALPAPEARFRDRTGPIRVLIIGGSQGARVLNQTMPAVAARLAGILTLWHQVGKGALEEVNRAYAANGETQHKVVEFIDDMAAAYAWADAVVCRAGALTVSEIAAAGLPALFVPFMHKDRQQYWNARLLEQACAAKIIEQPAFSVERVSDVLAGWDRPTLLTMAQRARAAAIPDATERVAREVAAAVRA</sequence>
<feature type="chain" id="PRO_1000002695" description="UDP-N-acetylglucosamine--N-acetylmuramyl-(pentapeptide) pyrophosphoryl-undecaprenol N-acetylglucosamine transferase">
    <location>
        <begin position="1"/>
        <end position="355"/>
    </location>
</feature>
<feature type="binding site" evidence="1">
    <location>
        <begin position="15"/>
        <end position="17"/>
    </location>
    <ligand>
        <name>UDP-N-acetyl-alpha-D-glucosamine</name>
        <dbReference type="ChEBI" id="CHEBI:57705"/>
    </ligand>
</feature>
<feature type="binding site" evidence="1">
    <location>
        <position position="127"/>
    </location>
    <ligand>
        <name>UDP-N-acetyl-alpha-D-glucosamine</name>
        <dbReference type="ChEBI" id="CHEBI:57705"/>
    </ligand>
</feature>
<feature type="binding site" evidence="1">
    <location>
        <position position="163"/>
    </location>
    <ligand>
        <name>UDP-N-acetyl-alpha-D-glucosamine</name>
        <dbReference type="ChEBI" id="CHEBI:57705"/>
    </ligand>
</feature>
<feature type="binding site" evidence="1">
    <location>
        <position position="191"/>
    </location>
    <ligand>
        <name>UDP-N-acetyl-alpha-D-glucosamine</name>
        <dbReference type="ChEBI" id="CHEBI:57705"/>
    </ligand>
</feature>
<feature type="binding site" evidence="1">
    <location>
        <position position="244"/>
    </location>
    <ligand>
        <name>UDP-N-acetyl-alpha-D-glucosamine</name>
        <dbReference type="ChEBI" id="CHEBI:57705"/>
    </ligand>
</feature>
<feature type="binding site" evidence="1">
    <location>
        <begin position="263"/>
        <end position="268"/>
    </location>
    <ligand>
        <name>UDP-N-acetyl-alpha-D-glucosamine</name>
        <dbReference type="ChEBI" id="CHEBI:57705"/>
    </ligand>
</feature>
<feature type="binding site" evidence="1">
    <location>
        <position position="288"/>
    </location>
    <ligand>
        <name>UDP-N-acetyl-alpha-D-glucosamine</name>
        <dbReference type="ChEBI" id="CHEBI:57705"/>
    </ligand>
</feature>
<dbReference type="EC" id="2.4.1.227" evidence="1"/>
<dbReference type="EMBL" id="AP008232">
    <property type="protein sequence ID" value="BAE73724.1"/>
    <property type="molecule type" value="Genomic_DNA"/>
</dbReference>
<dbReference type="RefSeq" id="WP_011410422.1">
    <property type="nucleotide sequence ID" value="NC_007712.1"/>
</dbReference>
<dbReference type="SMR" id="Q2NVV1"/>
<dbReference type="STRING" id="343509.SG0449"/>
<dbReference type="CAZy" id="GT28">
    <property type="family name" value="Glycosyltransferase Family 28"/>
</dbReference>
<dbReference type="KEGG" id="sgl:SG0449"/>
<dbReference type="eggNOG" id="COG0707">
    <property type="taxonomic scope" value="Bacteria"/>
</dbReference>
<dbReference type="HOGENOM" id="CLU_037404_2_0_6"/>
<dbReference type="OrthoDB" id="9808936at2"/>
<dbReference type="UniPathway" id="UPA00219"/>
<dbReference type="Proteomes" id="UP000001932">
    <property type="component" value="Chromosome"/>
</dbReference>
<dbReference type="GO" id="GO:0005886">
    <property type="term" value="C:plasma membrane"/>
    <property type="evidence" value="ECO:0007669"/>
    <property type="project" value="UniProtKB-SubCell"/>
</dbReference>
<dbReference type="GO" id="GO:0051991">
    <property type="term" value="F:UDP-N-acetyl-D-glucosamine:N-acetylmuramoyl-L-alanyl-D-glutamyl-meso-2,6-diaminopimelyl-D-alanyl-D-alanine-diphosphoundecaprenol 4-beta-N-acetylglucosaminlytransferase activity"/>
    <property type="evidence" value="ECO:0007669"/>
    <property type="project" value="RHEA"/>
</dbReference>
<dbReference type="GO" id="GO:0050511">
    <property type="term" value="F:undecaprenyldiphospho-muramoylpentapeptide beta-N-acetylglucosaminyltransferase activity"/>
    <property type="evidence" value="ECO:0007669"/>
    <property type="project" value="UniProtKB-UniRule"/>
</dbReference>
<dbReference type="GO" id="GO:0005975">
    <property type="term" value="P:carbohydrate metabolic process"/>
    <property type="evidence" value="ECO:0007669"/>
    <property type="project" value="InterPro"/>
</dbReference>
<dbReference type="GO" id="GO:0051301">
    <property type="term" value="P:cell division"/>
    <property type="evidence" value="ECO:0007669"/>
    <property type="project" value="UniProtKB-KW"/>
</dbReference>
<dbReference type="GO" id="GO:0071555">
    <property type="term" value="P:cell wall organization"/>
    <property type="evidence" value="ECO:0007669"/>
    <property type="project" value="UniProtKB-KW"/>
</dbReference>
<dbReference type="GO" id="GO:0030259">
    <property type="term" value="P:lipid glycosylation"/>
    <property type="evidence" value="ECO:0007669"/>
    <property type="project" value="UniProtKB-UniRule"/>
</dbReference>
<dbReference type="GO" id="GO:0009252">
    <property type="term" value="P:peptidoglycan biosynthetic process"/>
    <property type="evidence" value="ECO:0007669"/>
    <property type="project" value="UniProtKB-UniRule"/>
</dbReference>
<dbReference type="GO" id="GO:0008360">
    <property type="term" value="P:regulation of cell shape"/>
    <property type="evidence" value="ECO:0007669"/>
    <property type="project" value="UniProtKB-KW"/>
</dbReference>
<dbReference type="CDD" id="cd03785">
    <property type="entry name" value="GT28_MurG"/>
    <property type="match status" value="1"/>
</dbReference>
<dbReference type="FunFam" id="3.40.50.2000:FF:000016">
    <property type="entry name" value="UDP-N-acetylglucosamine--N-acetylmuramyl-(pentapeptide) pyrophosphoryl-undecaprenol N-acetylglucosamine transferase"/>
    <property type="match status" value="1"/>
</dbReference>
<dbReference type="Gene3D" id="3.40.50.2000">
    <property type="entry name" value="Glycogen Phosphorylase B"/>
    <property type="match status" value="2"/>
</dbReference>
<dbReference type="HAMAP" id="MF_00033">
    <property type="entry name" value="MurG"/>
    <property type="match status" value="1"/>
</dbReference>
<dbReference type="InterPro" id="IPR006009">
    <property type="entry name" value="GlcNAc_MurG"/>
</dbReference>
<dbReference type="InterPro" id="IPR007235">
    <property type="entry name" value="Glyco_trans_28_C"/>
</dbReference>
<dbReference type="InterPro" id="IPR004276">
    <property type="entry name" value="GlycoTrans_28_N"/>
</dbReference>
<dbReference type="NCBIfam" id="TIGR01133">
    <property type="entry name" value="murG"/>
    <property type="match status" value="1"/>
</dbReference>
<dbReference type="PANTHER" id="PTHR21015:SF22">
    <property type="entry name" value="GLYCOSYLTRANSFERASE"/>
    <property type="match status" value="1"/>
</dbReference>
<dbReference type="PANTHER" id="PTHR21015">
    <property type="entry name" value="UDP-N-ACETYLGLUCOSAMINE--N-ACETYLMURAMYL-(PENTAPEPTIDE) PYROPHOSPHORYL-UNDECAPRENOL N-ACETYLGLUCOSAMINE TRANSFERASE 1"/>
    <property type="match status" value="1"/>
</dbReference>
<dbReference type="Pfam" id="PF04101">
    <property type="entry name" value="Glyco_tran_28_C"/>
    <property type="match status" value="1"/>
</dbReference>
<dbReference type="Pfam" id="PF03033">
    <property type="entry name" value="Glyco_transf_28"/>
    <property type="match status" value="1"/>
</dbReference>
<dbReference type="SUPFAM" id="SSF53756">
    <property type="entry name" value="UDP-Glycosyltransferase/glycogen phosphorylase"/>
    <property type="match status" value="1"/>
</dbReference>
<protein>
    <recommendedName>
        <fullName evidence="1">UDP-N-acetylglucosamine--N-acetylmuramyl-(pentapeptide) pyrophosphoryl-undecaprenol N-acetylglucosamine transferase</fullName>
        <ecNumber evidence="1">2.4.1.227</ecNumber>
    </recommendedName>
    <alternativeName>
        <fullName evidence="1">Undecaprenyl-PP-MurNAc-pentapeptide-UDPGlcNAc GlcNAc transferase</fullName>
    </alternativeName>
</protein>
<accession>Q2NVV1</accession>
<reference key="1">
    <citation type="journal article" date="2006" name="Genome Res.">
        <title>Massive genome erosion and functional adaptations provide insights into the symbiotic lifestyle of Sodalis glossinidius in the tsetse host.</title>
        <authorList>
            <person name="Toh H."/>
            <person name="Weiss B.L."/>
            <person name="Perkin S.A.H."/>
            <person name="Yamashita A."/>
            <person name="Oshima K."/>
            <person name="Hattori M."/>
            <person name="Aksoy S."/>
        </authorList>
    </citation>
    <scope>NUCLEOTIDE SEQUENCE [LARGE SCALE GENOMIC DNA]</scope>
    <source>
        <strain>morsitans</strain>
    </source>
</reference>
<proteinExistence type="inferred from homology"/>
<name>MURG_SODGM</name>
<gene>
    <name evidence="1" type="primary">murG</name>
    <name type="ordered locus">SG0449</name>
</gene>